<keyword id="KW-0010">Activator</keyword>
<keyword id="KW-0963">Cytoplasm</keyword>
<keyword id="KW-0238">DNA-binding</keyword>
<keyword id="KW-0342">GTP-binding</keyword>
<keyword id="KW-0547">Nucleotide-binding</keyword>
<keyword id="KW-0597">Phosphoprotein</keyword>
<keyword id="KW-1185">Reference proteome</keyword>
<keyword id="KW-0678">Repressor</keyword>
<keyword id="KW-0804">Transcription</keyword>
<keyword id="KW-0805">Transcription regulation</keyword>
<gene>
    <name evidence="1 6" type="primary">codY</name>
    <name type="ordered locus">BA_3966</name>
    <name type="ordered locus">GBAA_3966</name>
    <name type="ordered locus">BAS3679</name>
</gene>
<reference key="1">
    <citation type="journal article" date="2003" name="Nature">
        <title>The genome sequence of Bacillus anthracis Ames and comparison to closely related bacteria.</title>
        <authorList>
            <person name="Read T.D."/>
            <person name="Peterson S.N."/>
            <person name="Tourasse N.J."/>
            <person name="Baillie L.W."/>
            <person name="Paulsen I.T."/>
            <person name="Nelson K.E."/>
            <person name="Tettelin H."/>
            <person name="Fouts D.E."/>
            <person name="Eisen J.A."/>
            <person name="Gill S.R."/>
            <person name="Holtzapple E.K."/>
            <person name="Okstad O.A."/>
            <person name="Helgason E."/>
            <person name="Rilstone J."/>
            <person name="Wu M."/>
            <person name="Kolonay J.F."/>
            <person name="Beanan M.J."/>
            <person name="Dodson R.J."/>
            <person name="Brinkac L.M."/>
            <person name="Gwinn M.L."/>
            <person name="DeBoy R.T."/>
            <person name="Madpu R."/>
            <person name="Daugherty S.C."/>
            <person name="Durkin A.S."/>
            <person name="Haft D.H."/>
            <person name="Nelson W.C."/>
            <person name="Peterson J.D."/>
            <person name="Pop M."/>
            <person name="Khouri H.M."/>
            <person name="Radune D."/>
            <person name="Benton J.L."/>
            <person name="Mahamoud Y."/>
            <person name="Jiang L."/>
            <person name="Hance I.R."/>
            <person name="Weidman J.F."/>
            <person name="Berry K.J."/>
            <person name="Plaut R.D."/>
            <person name="Wolf A.M."/>
            <person name="Watkins K.L."/>
            <person name="Nierman W.C."/>
            <person name="Hazen A."/>
            <person name="Cline R.T."/>
            <person name="Redmond C."/>
            <person name="Thwaite J.E."/>
            <person name="White O."/>
            <person name="Salzberg S.L."/>
            <person name="Thomason B."/>
            <person name="Friedlander A.M."/>
            <person name="Koehler T.M."/>
            <person name="Hanna P.C."/>
            <person name="Kolstoe A.-B."/>
            <person name="Fraser C.M."/>
        </authorList>
    </citation>
    <scope>NUCLEOTIDE SEQUENCE [LARGE SCALE GENOMIC DNA]</scope>
    <source>
        <strain>Ames / isolate Porton</strain>
    </source>
</reference>
<reference key="2">
    <citation type="journal article" date="2009" name="J. Bacteriol.">
        <title>The complete genome sequence of Bacillus anthracis Ames 'Ancestor'.</title>
        <authorList>
            <person name="Ravel J."/>
            <person name="Jiang L."/>
            <person name="Stanley S.T."/>
            <person name="Wilson M.R."/>
            <person name="Decker R.S."/>
            <person name="Read T.D."/>
            <person name="Worsham P."/>
            <person name="Keim P.S."/>
            <person name="Salzberg S.L."/>
            <person name="Fraser-Liggett C.M."/>
            <person name="Rasko D.A."/>
        </authorList>
    </citation>
    <scope>NUCLEOTIDE SEQUENCE [LARGE SCALE GENOMIC DNA]</scope>
    <source>
        <strain>Ames ancestor</strain>
    </source>
</reference>
<reference key="3">
    <citation type="submission" date="2004-01" db="EMBL/GenBank/DDBJ databases">
        <title>Complete genome sequence of Bacillus anthracis Sterne.</title>
        <authorList>
            <person name="Brettin T.S."/>
            <person name="Bruce D."/>
            <person name="Challacombe J.F."/>
            <person name="Gilna P."/>
            <person name="Han C."/>
            <person name="Hill K."/>
            <person name="Hitchcock P."/>
            <person name="Jackson P."/>
            <person name="Keim P."/>
            <person name="Longmire J."/>
            <person name="Lucas S."/>
            <person name="Okinaka R."/>
            <person name="Richardson P."/>
            <person name="Rubin E."/>
            <person name="Tice H."/>
        </authorList>
    </citation>
    <scope>NUCLEOTIDE SEQUENCE [LARGE SCALE GENOMIC DNA]</scope>
    <source>
        <strain>Sterne</strain>
    </source>
</reference>
<reference key="4">
    <citation type="journal article" date="2009" name="Infect. Immun.">
        <title>The global regulator CodY regulates toxin gene expression in Bacillus anthracis and is required for full virulence.</title>
        <authorList>
            <person name="van Schaik W."/>
            <person name="Chateau A."/>
            <person name="Dillies M.A."/>
            <person name="Coppee J.Y."/>
            <person name="Sonenshein A.L."/>
            <person name="Fouet A."/>
        </authorList>
    </citation>
    <scope>FUNCTION</scope>
    <scope>DISRUPTION PHENOTYPE</scope>
    <source>
        <strain>Sterne</strain>
    </source>
</reference>
<reference key="5">
    <citation type="journal article" date="2011" name="FASEB J.">
        <title>CodY regulation is required for full virulence and heme iron acquisition in Bacillus anthracis.</title>
        <authorList>
            <person name="Chateau A."/>
            <person name="van Schaik W."/>
            <person name="Six A."/>
            <person name="Aucher W."/>
            <person name="Fouet A."/>
        </authorList>
    </citation>
    <scope>FUNCTION</scope>
    <scope>DISRUPTION PHENOTYPE</scope>
    <source>
        <strain>Sterne</strain>
    </source>
</reference>
<reference key="6">
    <citation type="journal article" date="2013" name="J. Bacteriol.">
        <title>Identification of CodY targets in Bacillus anthracis by genome-wide in vitro binding analysis.</title>
        <authorList>
            <person name="Chateau A."/>
            <person name="van Schaik W."/>
            <person name="Joseph P."/>
            <person name="Handke L.D."/>
            <person name="McBride S.M."/>
            <person name="Smeets F.M."/>
            <person name="Sonenshein A.L."/>
            <person name="Fouet A."/>
        </authorList>
    </citation>
    <scope>FUNCTION</scope>
    <scope>DNA-BINDING</scope>
    <source>
        <strain>RTC10</strain>
    </source>
</reference>
<reference key="7">
    <citation type="journal article" date="2017" name="Pathog. Dis.">
        <title>Biochemical characterization of the GTP-sensing protein, CodY of Bacillus anthracis.</title>
        <authorList>
            <person name="Joon S."/>
            <person name="Gopalani M."/>
            <person name="Rahi A."/>
            <person name="Kulshreshtha P."/>
            <person name="Gogoi H."/>
            <person name="Bhatnagar S."/>
            <person name="Bhatnagar R."/>
        </authorList>
    </citation>
    <scope>FUNCTION</scope>
    <scope>GTPASE ACTIVITY</scope>
    <scope>BIOPHYSICOCHEMICAL PROPERTIES</scope>
    <scope>SUBUNIT</scope>
    <scope>PHOSPHORYLATION AT SER-215</scope>
    <scope>MUTAGENESIS OF SER-215</scope>
</reference>
<name>CODY_BACAN</name>
<accession>Q81WK7</accession>
<accession>Q6HUQ8</accession>
<accession>Q6KNY9</accession>
<sequence length="259" mass="28774">MELLAKTRKLNALLQSAAGKPVNFREMSDTMCEVIEANVFVVSRRGKLLGYAIHQQIENERMKQMLAERQFPEEYTQSLFNITETSSNLDVNSAYTAFPVENKELFGQGLTTIVPIVGGGERLGTLVLARLGQEFLDDDLILAEYSSTVVGMEILREKAEEIEEEARSKAVVQMAISSLSYSELEAIEHIFEELNGTEGLLVASKIADRVGITRSVIVNALRKLESAGVIESRSLGMKGTYIKVLNDKFLHELAKLKTN</sequence>
<organism>
    <name type="scientific">Bacillus anthracis</name>
    <dbReference type="NCBI Taxonomy" id="1392"/>
    <lineage>
        <taxon>Bacteria</taxon>
        <taxon>Bacillati</taxon>
        <taxon>Bacillota</taxon>
        <taxon>Bacilli</taxon>
        <taxon>Bacillales</taxon>
        <taxon>Bacillaceae</taxon>
        <taxon>Bacillus</taxon>
        <taxon>Bacillus cereus group</taxon>
    </lineage>
</organism>
<evidence type="ECO:0000255" key="1">
    <source>
        <dbReference type="HAMAP-Rule" id="MF_00621"/>
    </source>
</evidence>
<evidence type="ECO:0000269" key="2">
    <source>
    </source>
</evidence>
<evidence type="ECO:0000269" key="3">
    <source>
    </source>
</evidence>
<evidence type="ECO:0000269" key="4">
    <source>
    </source>
</evidence>
<evidence type="ECO:0000269" key="5">
    <source>
    </source>
</evidence>
<evidence type="ECO:0000303" key="6">
    <source>
    </source>
</evidence>
<evidence type="ECO:0000305" key="7"/>
<proteinExistence type="evidence at protein level"/>
<feature type="chain" id="PRO_0000213213" description="Global transcriptional regulator CodY">
    <location>
        <begin position="1"/>
        <end position="259"/>
    </location>
</feature>
<feature type="DNA-binding region" description="H-T-H motif" evidence="1">
    <location>
        <begin position="203"/>
        <end position="222"/>
    </location>
</feature>
<feature type="region of interest" description="GAF domain" evidence="1">
    <location>
        <begin position="1"/>
        <end position="155"/>
    </location>
</feature>
<feature type="modified residue" description="Phosphoserine" evidence="1 5">
    <location>
        <position position="215"/>
    </location>
</feature>
<feature type="mutagenesis site" description="Abolishes autophosphorylation." evidence="5">
    <original>S</original>
    <variation>A</variation>
    <location>
        <position position="215"/>
    </location>
</feature>
<comment type="function">
    <text evidence="1 2">DNA-binding global transcriptional regulator which is involved in the adaptive response to starvation and acts by directly or indirectly controlling the expression of numerous genes in response to nutrient availability. During rapid exponential growth, CodY is highly active and represses genes whose products allow adaptation to nutrient depletion.</text>
</comment>
<comment type="function">
    <text evidence="2 3 4 5">In B.anthracis, CodY represses or activates directly or indirectly several hundred genes, including genes involved in amino acid biosynthesis and transport, as well as nucleic acid metabolism, the pentose pathway, the tricarboxylic acid cycle, acetyl coenzyme A synthesis and oxidative stress functions (PubMed:19651859, PubMed:23292769). Among others, represses directly the expression of sap and eag, encoding the two surface layer (S-layer) proteins, by binding directly to their promoter region (PubMed:23292769). Binds to a 11-bp non-palindromic consensus DNA motif, the CodY-binding site (PubMed:23292769). Additionally, in pathogenic bacteria, CodY also regulates virulence gene expression and provides a regulatory link between metabolism and pathogenesis (PubMed:19651859, PubMed:21911592). Is essential for the acquisition of iron from the host during infection (PubMed:21911592). Interacts with the atxA global regulator promoter region, but it has only a small effect on atxA transcription, specifically during the exponential growth phase (PubMed:19651859, PubMed:23292769). May regulate toxin gene expression by post-translationally regulating the accumulation of AtxA (PubMed:19651859). Has no discernible effect on the regulation of capsule biosynthesis (PubMed:21911592). Binds to GTP and exhibits weak GTPase activity (PubMed:28472295).</text>
</comment>
<comment type="biophysicochemical properties">
    <kinetics>
        <KM evidence="5">0.16 mM for GTP</KM>
    </kinetics>
</comment>
<comment type="subunit">
    <text evidence="5">Monomer and homodimer.</text>
</comment>
<comment type="subcellular location">
    <subcellularLocation>
        <location evidence="1">Cytoplasm</location>
    </subcellularLocation>
</comment>
<comment type="PTM">
    <text evidence="5">Autophosphorylated on Ser-215 (PubMed:28472295). Autophosphorylation may regulate CodY activity (PubMed:28472295).</text>
</comment>
<comment type="disruption phenotype">
    <text evidence="2 3">Disruption of the gene results in strongly attenuated virulence in both mouse and guinea pig models of infection (PubMed:19651859, PubMed:21911592). Disruption leads to a delayed initiation of dissemination but similar kinetics of subsequent spread of the bacilli (PubMed:21911592). The mutant cannot grow on heme iron as sole iron source (PubMed:21911592). Disruption alters the expression of more than 200 genes, including the toxin genes (PubMed:19651859). It also causes a decrease in AtxA protein accumulation but it does not affect its transcription or its translation (PubMed:19651859). It does not affect either ex vivo or in vivo capsulation (PubMed:21911592).</text>
</comment>
<comment type="similarity">
    <text evidence="1">Belongs to the CodY family.</text>
</comment>
<dbReference type="EMBL" id="AE016879">
    <property type="protein sequence ID" value="AAP27695.1"/>
    <property type="molecule type" value="Genomic_DNA"/>
</dbReference>
<dbReference type="EMBL" id="AE017334">
    <property type="protein sequence ID" value="AAT33080.1"/>
    <property type="molecule type" value="Genomic_DNA"/>
</dbReference>
<dbReference type="EMBL" id="AE017225">
    <property type="protein sequence ID" value="AAT55981.1"/>
    <property type="molecule type" value="Genomic_DNA"/>
</dbReference>
<dbReference type="RefSeq" id="NP_846209.1">
    <property type="nucleotide sequence ID" value="NC_003997.3"/>
</dbReference>
<dbReference type="RefSeq" id="WP_000421288.1">
    <property type="nucleotide sequence ID" value="NZ_WXXJ01000026.1"/>
</dbReference>
<dbReference type="RefSeq" id="YP_029930.1">
    <property type="nucleotide sequence ID" value="NC_005945.1"/>
</dbReference>
<dbReference type="SMR" id="Q81WK7"/>
<dbReference type="STRING" id="261594.GBAA_3966"/>
<dbReference type="iPTMnet" id="Q81WK7"/>
<dbReference type="DNASU" id="1086802"/>
<dbReference type="GeneID" id="83637535"/>
<dbReference type="KEGG" id="ban:BA_3966"/>
<dbReference type="KEGG" id="bar:GBAA_3966"/>
<dbReference type="KEGG" id="bat:BAS3679"/>
<dbReference type="PATRIC" id="fig|198094.11.peg.3936"/>
<dbReference type="eggNOG" id="COG4465">
    <property type="taxonomic scope" value="Bacteria"/>
</dbReference>
<dbReference type="HOGENOM" id="CLU_089581_0_0_9"/>
<dbReference type="OMA" id="FPEEYNE"/>
<dbReference type="OrthoDB" id="2056at2"/>
<dbReference type="Proteomes" id="UP000000427">
    <property type="component" value="Chromosome"/>
</dbReference>
<dbReference type="Proteomes" id="UP000000594">
    <property type="component" value="Chromosome"/>
</dbReference>
<dbReference type="CollecTF" id="EXPREG_000010c0"/>
<dbReference type="GO" id="GO:0005737">
    <property type="term" value="C:cytoplasm"/>
    <property type="evidence" value="ECO:0007669"/>
    <property type="project" value="UniProtKB-SubCell"/>
</dbReference>
<dbReference type="GO" id="GO:0003677">
    <property type="term" value="F:DNA binding"/>
    <property type="evidence" value="ECO:0007669"/>
    <property type="project" value="UniProtKB-UniRule"/>
</dbReference>
<dbReference type="GO" id="GO:0003700">
    <property type="term" value="F:DNA-binding transcription factor activity"/>
    <property type="evidence" value="ECO:0007669"/>
    <property type="project" value="InterPro"/>
</dbReference>
<dbReference type="GO" id="GO:0005525">
    <property type="term" value="F:GTP binding"/>
    <property type="evidence" value="ECO:0007669"/>
    <property type="project" value="UniProtKB-KW"/>
</dbReference>
<dbReference type="GO" id="GO:0045892">
    <property type="term" value="P:negative regulation of DNA-templated transcription"/>
    <property type="evidence" value="ECO:0007669"/>
    <property type="project" value="UniProtKB-UniRule"/>
</dbReference>
<dbReference type="FunFam" id="1.10.10.10:FF:000034">
    <property type="entry name" value="GTP-sensing transcriptional pleiotropic repressor CodY"/>
    <property type="match status" value="1"/>
</dbReference>
<dbReference type="FunFam" id="3.30.450.40:FF:000003">
    <property type="entry name" value="GTP-sensing transcriptional pleiotropic repressor CodY"/>
    <property type="match status" value="1"/>
</dbReference>
<dbReference type="Gene3D" id="3.30.450.40">
    <property type="match status" value="1"/>
</dbReference>
<dbReference type="Gene3D" id="1.10.10.10">
    <property type="entry name" value="Winged helix-like DNA-binding domain superfamily/Winged helix DNA-binding domain"/>
    <property type="match status" value="1"/>
</dbReference>
<dbReference type="HAMAP" id="MF_00621">
    <property type="entry name" value="HTH_type_CodY"/>
    <property type="match status" value="1"/>
</dbReference>
<dbReference type="InterPro" id="IPR014154">
    <property type="entry name" value="CodY"/>
</dbReference>
<dbReference type="InterPro" id="IPR029016">
    <property type="entry name" value="GAF-like_dom_sf"/>
</dbReference>
<dbReference type="InterPro" id="IPR013198">
    <property type="entry name" value="GTP_trans_reg_CodY_C"/>
</dbReference>
<dbReference type="InterPro" id="IPR010312">
    <property type="entry name" value="Transc_reg_CodY_N"/>
</dbReference>
<dbReference type="InterPro" id="IPR036388">
    <property type="entry name" value="WH-like_DNA-bd_sf"/>
</dbReference>
<dbReference type="InterPro" id="IPR036390">
    <property type="entry name" value="WH_DNA-bd_sf"/>
</dbReference>
<dbReference type="NCBIfam" id="TIGR02787">
    <property type="entry name" value="codY_Gpos"/>
    <property type="match status" value="1"/>
</dbReference>
<dbReference type="NCBIfam" id="NF003170">
    <property type="entry name" value="PRK04158.1"/>
    <property type="match status" value="1"/>
</dbReference>
<dbReference type="PANTHER" id="PTHR40062:SF1">
    <property type="entry name" value="GLOBAL TRANSCRIPTIONAL REGULATOR CODY"/>
    <property type="match status" value="1"/>
</dbReference>
<dbReference type="PANTHER" id="PTHR40062">
    <property type="entry name" value="GTP-SENSING TRANSCRIPTIONAL PLEIOTROPIC REPRESSOR CODY"/>
    <property type="match status" value="1"/>
</dbReference>
<dbReference type="Pfam" id="PF06018">
    <property type="entry name" value="CodY"/>
    <property type="match status" value="1"/>
</dbReference>
<dbReference type="Pfam" id="PF08222">
    <property type="entry name" value="HTH_CodY"/>
    <property type="match status" value="1"/>
</dbReference>
<dbReference type="PIRSF" id="PIRSF011572">
    <property type="entry name" value="GTP_sensing_CodY"/>
    <property type="match status" value="1"/>
</dbReference>
<dbReference type="SUPFAM" id="SSF46785">
    <property type="entry name" value="Winged helix' DNA-binding domain"/>
    <property type="match status" value="1"/>
</dbReference>
<protein>
    <recommendedName>
        <fullName evidence="1 7">Global transcriptional regulator CodY</fullName>
    </recommendedName>
</protein>